<gene>
    <name evidence="1" type="primary">mhpB</name>
    <name type="ordered locus">Bcep1808_5387</name>
</gene>
<protein>
    <recommendedName>
        <fullName evidence="1">2,3-dihydroxyphenylpropionate/2,3-dihydroxicinnamic acid 1,2-dioxygenase</fullName>
        <ecNumber evidence="1">1.13.11.16</ecNumber>
    </recommendedName>
    <alternativeName>
        <fullName evidence="1">3-carboxyethylcatechol 2,3-dioxygenase</fullName>
    </alternativeName>
</protein>
<dbReference type="EC" id="1.13.11.16" evidence="1"/>
<dbReference type="EMBL" id="CP000615">
    <property type="protein sequence ID" value="ABO58333.1"/>
    <property type="molecule type" value="Genomic_DNA"/>
</dbReference>
<dbReference type="SMR" id="A4JPY0"/>
<dbReference type="KEGG" id="bvi:Bcep1808_5387"/>
<dbReference type="eggNOG" id="COG3384">
    <property type="taxonomic scope" value="Bacteria"/>
</dbReference>
<dbReference type="HOGENOM" id="CLU_078149_0_0_4"/>
<dbReference type="UniPathway" id="UPA00714"/>
<dbReference type="Proteomes" id="UP000002287">
    <property type="component" value="Chromosome 2"/>
</dbReference>
<dbReference type="GO" id="GO:0047070">
    <property type="term" value="F:3-carboxyethylcatechol 2,3-dioxygenase activity"/>
    <property type="evidence" value="ECO:0007669"/>
    <property type="project" value="UniProtKB-UniRule"/>
</dbReference>
<dbReference type="GO" id="GO:0008198">
    <property type="term" value="F:ferrous iron binding"/>
    <property type="evidence" value="ECO:0007669"/>
    <property type="project" value="InterPro"/>
</dbReference>
<dbReference type="GO" id="GO:0019380">
    <property type="term" value="P:3-phenylpropionate catabolic process"/>
    <property type="evidence" value="ECO:0007669"/>
    <property type="project" value="UniProtKB-UniRule"/>
</dbReference>
<dbReference type="CDD" id="cd07365">
    <property type="entry name" value="MhpB_like"/>
    <property type="match status" value="1"/>
</dbReference>
<dbReference type="Gene3D" id="3.40.830.10">
    <property type="entry name" value="LigB-like"/>
    <property type="match status" value="1"/>
</dbReference>
<dbReference type="HAMAP" id="MF_01653">
    <property type="entry name" value="MhpB"/>
    <property type="match status" value="1"/>
</dbReference>
<dbReference type="InterPro" id="IPR023789">
    <property type="entry name" value="DHPP/DHXA_dioxygenase"/>
</dbReference>
<dbReference type="InterPro" id="IPR004183">
    <property type="entry name" value="Xdiol_dOase_suB"/>
</dbReference>
<dbReference type="NCBIfam" id="NF009908">
    <property type="entry name" value="PRK13370.1-2"/>
    <property type="match status" value="1"/>
</dbReference>
<dbReference type="NCBIfam" id="NF009910">
    <property type="entry name" value="PRK13370.1-4"/>
    <property type="match status" value="1"/>
</dbReference>
<dbReference type="Pfam" id="PF02900">
    <property type="entry name" value="LigB"/>
    <property type="match status" value="1"/>
</dbReference>
<dbReference type="SUPFAM" id="SSF53213">
    <property type="entry name" value="LigB-like"/>
    <property type="match status" value="1"/>
</dbReference>
<accession>A4JPY0</accession>
<feature type="chain" id="PRO_0000337645" description="2,3-dihydroxyphenylpropionate/2,3-dihydroxicinnamic acid 1,2-dioxygenase">
    <location>
        <begin position="1"/>
        <end position="317"/>
    </location>
</feature>
<feature type="active site" description="Proton donor" evidence="1">
    <location>
        <position position="115"/>
    </location>
</feature>
<feature type="active site" description="Proton acceptor" evidence="1">
    <location>
        <position position="179"/>
    </location>
</feature>
<organism>
    <name type="scientific">Burkholderia vietnamiensis (strain G4 / LMG 22486)</name>
    <name type="common">Burkholderia cepacia (strain R1808)</name>
    <dbReference type="NCBI Taxonomy" id="269482"/>
    <lineage>
        <taxon>Bacteria</taxon>
        <taxon>Pseudomonadati</taxon>
        <taxon>Pseudomonadota</taxon>
        <taxon>Betaproteobacteria</taxon>
        <taxon>Burkholderiales</taxon>
        <taxon>Burkholderiaceae</taxon>
        <taxon>Burkholderia</taxon>
        <taxon>Burkholderia cepacia complex</taxon>
    </lineage>
</organism>
<comment type="function">
    <text evidence="1">Catalyzes the non-heme iron(II)-dependent oxidative cleavage of 2,3-dihydroxyphenylpropionic acid and 2,3-dihydroxicinnamic acid into 2-hydroxy-6-ketononadienedioate and 2-hydroxy-6-ketononatrienedioate, respectively.</text>
</comment>
<comment type="catalytic activity">
    <reaction evidence="1">
        <text>3-(2,3-dihydroxyphenyl)propanoate + O2 = (2Z,4E)-2-hydroxy-6-oxonona-2,4-dienedioate + H(+)</text>
        <dbReference type="Rhea" id="RHEA:23840"/>
        <dbReference type="ChEBI" id="CHEBI:15378"/>
        <dbReference type="ChEBI" id="CHEBI:15379"/>
        <dbReference type="ChEBI" id="CHEBI:46951"/>
        <dbReference type="ChEBI" id="CHEBI:66887"/>
        <dbReference type="EC" id="1.13.11.16"/>
    </reaction>
</comment>
<comment type="catalytic activity">
    <reaction evidence="1">
        <text>(2E)-3-(2,3-dihydroxyphenyl)prop-2-enoate + O2 = (2Z,4E,7E)-2-hydroxy-6-oxonona-2,4,7-trienedioate + H(+)</text>
        <dbReference type="Rhea" id="RHEA:25054"/>
        <dbReference type="ChEBI" id="CHEBI:15378"/>
        <dbReference type="ChEBI" id="CHEBI:15379"/>
        <dbReference type="ChEBI" id="CHEBI:58642"/>
        <dbReference type="ChEBI" id="CHEBI:66888"/>
        <dbReference type="EC" id="1.13.11.16"/>
    </reaction>
</comment>
<comment type="cofactor">
    <cofactor evidence="1">
        <name>Fe(2+)</name>
        <dbReference type="ChEBI" id="CHEBI:29033"/>
    </cofactor>
</comment>
<comment type="pathway">
    <text evidence="1">Aromatic compound metabolism; 3-phenylpropanoate degradation.</text>
</comment>
<comment type="subunit">
    <text evidence="1">Homotetramer.</text>
</comment>
<comment type="similarity">
    <text evidence="1">Belongs to the LigB/MhpB extradiol dioxygenase family.</text>
</comment>
<keyword id="KW-0058">Aromatic hydrocarbons catabolism</keyword>
<keyword id="KW-0223">Dioxygenase</keyword>
<keyword id="KW-0408">Iron</keyword>
<keyword id="KW-0560">Oxidoreductase</keyword>
<proteinExistence type="inferred from homology"/>
<name>MHPB_BURVG</name>
<reference key="1">
    <citation type="submission" date="2007-03" db="EMBL/GenBank/DDBJ databases">
        <title>Complete sequence of chromosome 2 of Burkholderia vietnamiensis G4.</title>
        <authorList>
            <consortium name="US DOE Joint Genome Institute"/>
            <person name="Copeland A."/>
            <person name="Lucas S."/>
            <person name="Lapidus A."/>
            <person name="Barry K."/>
            <person name="Detter J.C."/>
            <person name="Glavina del Rio T."/>
            <person name="Hammon N."/>
            <person name="Israni S."/>
            <person name="Dalin E."/>
            <person name="Tice H."/>
            <person name="Pitluck S."/>
            <person name="Chain P."/>
            <person name="Malfatti S."/>
            <person name="Shin M."/>
            <person name="Vergez L."/>
            <person name="Schmutz J."/>
            <person name="Larimer F."/>
            <person name="Land M."/>
            <person name="Hauser L."/>
            <person name="Kyrpides N."/>
            <person name="Tiedje J."/>
            <person name="Richardson P."/>
        </authorList>
    </citation>
    <scope>NUCLEOTIDE SEQUENCE [LARGE SCALE GENOMIC DNA]</scope>
    <source>
        <strain>G4 / LMG 22486</strain>
    </source>
</reference>
<evidence type="ECO:0000255" key="1">
    <source>
        <dbReference type="HAMAP-Rule" id="MF_01653"/>
    </source>
</evidence>
<sequence length="317" mass="33930">MPIHLECMSHTPLHGYFDPAPAVVAEVERVQRAARERVDAFDPELVIVFAPDHYNGFFYDVMPQFCIGASATAVGDFGSAAGPLPVARDAALALADAALASDIDVAVSYRMQVDHGCAQALEVLTGRIDRFPVVPVFINSVAPPMASCRRARLLGDAIGRVVARMNRRVLLIGSGGISHEPPVPEIAGADDVVAERLIAGRNPSPASRDARQSSTVAAARAFAAGDSRLHPLNPAWDRRFLELLERGDLTAADGLTNEAITRDAGKSAHEIRTWVAAFGALAASGPYAASIDYYRAIPEWIAGFGAMHARERTLSRR</sequence>